<comment type="function">
    <text evidence="1">Catalyzes the decarboxylation of orotidine 5'-monophosphate (OMP) to uridine 5'-monophosphate (UMP).</text>
</comment>
<comment type="catalytic activity">
    <reaction evidence="1">
        <text>orotidine 5'-phosphate + H(+) = UMP + CO2</text>
        <dbReference type="Rhea" id="RHEA:11596"/>
        <dbReference type="ChEBI" id="CHEBI:15378"/>
        <dbReference type="ChEBI" id="CHEBI:16526"/>
        <dbReference type="ChEBI" id="CHEBI:57538"/>
        <dbReference type="ChEBI" id="CHEBI:57865"/>
        <dbReference type="EC" id="4.1.1.23"/>
    </reaction>
</comment>
<comment type="pathway">
    <text evidence="1">Pyrimidine metabolism; UMP biosynthesis via de novo pathway; UMP from orotate: step 2/2.</text>
</comment>
<comment type="subunit">
    <text evidence="1">Homodimer.</text>
</comment>
<comment type="similarity">
    <text evidence="1">Belongs to the OMP decarboxylase family. Type 1 subfamily.</text>
</comment>
<keyword id="KW-0210">Decarboxylase</keyword>
<keyword id="KW-0456">Lyase</keyword>
<keyword id="KW-0665">Pyrimidine biosynthesis</keyword>
<keyword id="KW-1185">Reference proteome</keyword>
<name>PYRF_ECO24</name>
<dbReference type="EC" id="4.1.1.23" evidence="1"/>
<dbReference type="EMBL" id="CP000800">
    <property type="protein sequence ID" value="ABV20388.1"/>
    <property type="molecule type" value="Genomic_DNA"/>
</dbReference>
<dbReference type="RefSeq" id="WP_000176275.1">
    <property type="nucleotide sequence ID" value="NC_009801.1"/>
</dbReference>
<dbReference type="SMR" id="A7ZLA2"/>
<dbReference type="KEGG" id="ecw:EcE24377A_1484"/>
<dbReference type="HOGENOM" id="CLU_067069_0_0_6"/>
<dbReference type="UniPathway" id="UPA00070">
    <property type="reaction ID" value="UER00120"/>
</dbReference>
<dbReference type="Proteomes" id="UP000001122">
    <property type="component" value="Chromosome"/>
</dbReference>
<dbReference type="GO" id="GO:0005829">
    <property type="term" value="C:cytosol"/>
    <property type="evidence" value="ECO:0007669"/>
    <property type="project" value="TreeGrafter"/>
</dbReference>
<dbReference type="GO" id="GO:0004590">
    <property type="term" value="F:orotidine-5'-phosphate decarboxylase activity"/>
    <property type="evidence" value="ECO:0007669"/>
    <property type="project" value="UniProtKB-UniRule"/>
</dbReference>
<dbReference type="GO" id="GO:0006207">
    <property type="term" value="P:'de novo' pyrimidine nucleobase biosynthetic process"/>
    <property type="evidence" value="ECO:0007669"/>
    <property type="project" value="InterPro"/>
</dbReference>
<dbReference type="GO" id="GO:0044205">
    <property type="term" value="P:'de novo' UMP biosynthetic process"/>
    <property type="evidence" value="ECO:0007669"/>
    <property type="project" value="UniProtKB-UniRule"/>
</dbReference>
<dbReference type="CDD" id="cd04725">
    <property type="entry name" value="OMP_decarboxylase_like"/>
    <property type="match status" value="1"/>
</dbReference>
<dbReference type="FunFam" id="3.20.20.70:FF:000015">
    <property type="entry name" value="Orotidine 5'-phosphate decarboxylase"/>
    <property type="match status" value="1"/>
</dbReference>
<dbReference type="Gene3D" id="3.20.20.70">
    <property type="entry name" value="Aldolase class I"/>
    <property type="match status" value="1"/>
</dbReference>
<dbReference type="HAMAP" id="MF_01200_B">
    <property type="entry name" value="OMPdecase_type1_B"/>
    <property type="match status" value="1"/>
</dbReference>
<dbReference type="InterPro" id="IPR013785">
    <property type="entry name" value="Aldolase_TIM"/>
</dbReference>
<dbReference type="InterPro" id="IPR014732">
    <property type="entry name" value="OMPdecase"/>
</dbReference>
<dbReference type="InterPro" id="IPR018089">
    <property type="entry name" value="OMPdecase_AS"/>
</dbReference>
<dbReference type="InterPro" id="IPR047596">
    <property type="entry name" value="OMPdecase_bac"/>
</dbReference>
<dbReference type="InterPro" id="IPR001754">
    <property type="entry name" value="OMPdeCOase_dom"/>
</dbReference>
<dbReference type="InterPro" id="IPR011060">
    <property type="entry name" value="RibuloseP-bd_barrel"/>
</dbReference>
<dbReference type="NCBIfam" id="NF001273">
    <property type="entry name" value="PRK00230.1"/>
    <property type="match status" value="1"/>
</dbReference>
<dbReference type="NCBIfam" id="TIGR01740">
    <property type="entry name" value="pyrF"/>
    <property type="match status" value="1"/>
</dbReference>
<dbReference type="PANTHER" id="PTHR32119">
    <property type="entry name" value="OROTIDINE 5'-PHOSPHATE DECARBOXYLASE"/>
    <property type="match status" value="1"/>
</dbReference>
<dbReference type="PANTHER" id="PTHR32119:SF2">
    <property type="entry name" value="OROTIDINE 5'-PHOSPHATE DECARBOXYLASE"/>
    <property type="match status" value="1"/>
</dbReference>
<dbReference type="Pfam" id="PF00215">
    <property type="entry name" value="OMPdecase"/>
    <property type="match status" value="1"/>
</dbReference>
<dbReference type="SMART" id="SM00934">
    <property type="entry name" value="OMPdecase"/>
    <property type="match status" value="1"/>
</dbReference>
<dbReference type="SUPFAM" id="SSF51366">
    <property type="entry name" value="Ribulose-phoshate binding barrel"/>
    <property type="match status" value="1"/>
</dbReference>
<dbReference type="PROSITE" id="PS00156">
    <property type="entry name" value="OMPDECASE"/>
    <property type="match status" value="1"/>
</dbReference>
<reference key="1">
    <citation type="journal article" date="2008" name="J. Bacteriol.">
        <title>The pangenome structure of Escherichia coli: comparative genomic analysis of E. coli commensal and pathogenic isolates.</title>
        <authorList>
            <person name="Rasko D.A."/>
            <person name="Rosovitz M.J."/>
            <person name="Myers G.S.A."/>
            <person name="Mongodin E.F."/>
            <person name="Fricke W.F."/>
            <person name="Gajer P."/>
            <person name="Crabtree J."/>
            <person name="Sebaihia M."/>
            <person name="Thomson N.R."/>
            <person name="Chaudhuri R."/>
            <person name="Henderson I.R."/>
            <person name="Sperandio V."/>
            <person name="Ravel J."/>
        </authorList>
    </citation>
    <scope>NUCLEOTIDE SEQUENCE [LARGE SCALE GENOMIC DNA]</scope>
    <source>
        <strain>E24377A / ETEC</strain>
    </source>
</reference>
<protein>
    <recommendedName>
        <fullName evidence="1">Orotidine 5'-phosphate decarboxylase</fullName>
        <ecNumber evidence="1">4.1.1.23</ecNumber>
    </recommendedName>
    <alternativeName>
        <fullName evidence="1">OMP decarboxylase</fullName>
        <shortName evidence="1">OMPDCase</shortName>
        <shortName evidence="1">OMPdecase</shortName>
    </alternativeName>
</protein>
<evidence type="ECO:0000255" key="1">
    <source>
        <dbReference type="HAMAP-Rule" id="MF_01200"/>
    </source>
</evidence>
<gene>
    <name evidence="1" type="primary">pyrF</name>
    <name type="ordered locus">EcE24377A_1484</name>
</gene>
<proteinExistence type="inferred from homology"/>
<sequence length="245" mass="26276">MTLTASSSSRAVTNSPVVVALDYHNRDDALSFVDKIDPRDCRLKVGKEMFTLFGPQFVRELQQRGFDIFLDLKFHDIPNTAAHAVAAAADLGVWMVNVHASGGARMMTAAREALVPFGKDAPLLIAVTVLTSMEASDLADLGVTLSPADYAERLAALTQKCGLDGVVCSAQEAVRFKQVFGQEFKLVTPGIRPQGSDAGDQRRIMTPEQALAAGVDYMVIGRPVTQSVDPAQTLKAINASLQRSA</sequence>
<feature type="chain" id="PRO_1000065904" description="Orotidine 5'-phosphate decarboxylase">
    <location>
        <begin position="1"/>
        <end position="245"/>
    </location>
</feature>
<feature type="active site" description="Proton donor" evidence="1">
    <location>
        <position position="73"/>
    </location>
</feature>
<feature type="binding site" evidence="1">
    <location>
        <position position="22"/>
    </location>
    <ligand>
        <name>substrate</name>
    </ligand>
</feature>
<feature type="binding site" evidence="1">
    <location>
        <position position="44"/>
    </location>
    <ligand>
        <name>substrate</name>
    </ligand>
</feature>
<feature type="binding site" evidence="1">
    <location>
        <begin position="71"/>
        <end position="80"/>
    </location>
    <ligand>
        <name>substrate</name>
    </ligand>
</feature>
<feature type="binding site" evidence="1">
    <location>
        <position position="131"/>
    </location>
    <ligand>
        <name>substrate</name>
    </ligand>
</feature>
<feature type="binding site" evidence="1">
    <location>
        <position position="192"/>
    </location>
    <ligand>
        <name>substrate</name>
    </ligand>
</feature>
<feature type="binding site" evidence="1">
    <location>
        <position position="201"/>
    </location>
    <ligand>
        <name>substrate</name>
    </ligand>
</feature>
<feature type="binding site" evidence="1">
    <location>
        <position position="221"/>
    </location>
    <ligand>
        <name>substrate</name>
    </ligand>
</feature>
<feature type="binding site" evidence="1">
    <location>
        <position position="222"/>
    </location>
    <ligand>
        <name>substrate</name>
    </ligand>
</feature>
<organism>
    <name type="scientific">Escherichia coli O139:H28 (strain E24377A / ETEC)</name>
    <dbReference type="NCBI Taxonomy" id="331111"/>
    <lineage>
        <taxon>Bacteria</taxon>
        <taxon>Pseudomonadati</taxon>
        <taxon>Pseudomonadota</taxon>
        <taxon>Gammaproteobacteria</taxon>
        <taxon>Enterobacterales</taxon>
        <taxon>Enterobacteriaceae</taxon>
        <taxon>Escherichia</taxon>
    </lineage>
</organism>
<accession>A7ZLA2</accession>